<name>METK_POLAQ</name>
<keyword id="KW-0067">ATP-binding</keyword>
<keyword id="KW-0963">Cytoplasm</keyword>
<keyword id="KW-0460">Magnesium</keyword>
<keyword id="KW-0479">Metal-binding</keyword>
<keyword id="KW-0547">Nucleotide-binding</keyword>
<keyword id="KW-0554">One-carbon metabolism</keyword>
<keyword id="KW-0630">Potassium</keyword>
<keyword id="KW-1185">Reference proteome</keyword>
<keyword id="KW-0808">Transferase</keyword>
<sequence>MANDYFFTSESVSEGHPDKVADQISDAILDAILAQDPTARVAAETLCNTGLVVLAGEITTHANVDYIQVARNTLREIGYDNTDYGIDYKGCAVLVAYDKQSPDIAQGVDKAHDDGLDQGAGDQGLMFGYACDETSELMPMPIHLSHRLVERQSQLRRDGRLNWLRPDAKSQVTLRYVDGKPDSIDTVVLSTQHDEEISLEKLREAVIEEIIKPVLPKHLIKGAINFLVNPTGRFVIGGPQGDCGLTGRKIIVDTYGGAAPHGGGAFSGKDPSKVDRSAAYAGRYVAKNVVAAGLASKCLIQISYAIGVAKPTSVMVSTFGTGKISDEKIAQLVSENFDLRPKGIVKMLNLLRPIYRKTAAYGHFGREEPEFTWEQTDKAAALRAAAGL</sequence>
<accession>A4T0F0</accession>
<organism>
    <name type="scientific">Polynucleobacter asymbioticus (strain DSM 18221 / CIP 109841 / QLW-P1DMWA-1)</name>
    <name type="common">Polynucleobacter necessarius subsp. asymbioticus</name>
    <dbReference type="NCBI Taxonomy" id="312153"/>
    <lineage>
        <taxon>Bacteria</taxon>
        <taxon>Pseudomonadati</taxon>
        <taxon>Pseudomonadota</taxon>
        <taxon>Betaproteobacteria</taxon>
        <taxon>Burkholderiales</taxon>
        <taxon>Burkholderiaceae</taxon>
        <taxon>Polynucleobacter</taxon>
    </lineage>
</organism>
<reference key="1">
    <citation type="journal article" date="2012" name="Stand. Genomic Sci.">
        <title>Complete genome sequence of Polynucleobacter necessarius subsp. asymbioticus type strain (QLW-P1DMWA-1(T)).</title>
        <authorList>
            <person name="Meincke L."/>
            <person name="Copeland A."/>
            <person name="Lapidus A."/>
            <person name="Lucas S."/>
            <person name="Berry K.W."/>
            <person name="Del Rio T.G."/>
            <person name="Hammon N."/>
            <person name="Dalin E."/>
            <person name="Tice H."/>
            <person name="Pitluck S."/>
            <person name="Richardson P."/>
            <person name="Bruce D."/>
            <person name="Goodwin L."/>
            <person name="Han C."/>
            <person name="Tapia R."/>
            <person name="Detter J.C."/>
            <person name="Schmutz J."/>
            <person name="Brettin T."/>
            <person name="Larimer F."/>
            <person name="Land M."/>
            <person name="Hauser L."/>
            <person name="Kyrpides N.C."/>
            <person name="Ivanova N."/>
            <person name="Goker M."/>
            <person name="Woyke T."/>
            <person name="Wu Q.L."/>
            <person name="Pockl M."/>
            <person name="Hahn M.W."/>
            <person name="Klenk H.P."/>
        </authorList>
    </citation>
    <scope>NUCLEOTIDE SEQUENCE [LARGE SCALE GENOMIC DNA]</scope>
    <source>
        <strain>DSM 18221 / CIP 109841 / QLW-P1DMWA-1</strain>
    </source>
</reference>
<gene>
    <name evidence="1" type="primary">metK</name>
    <name type="ordered locus">Pnuc_2003</name>
</gene>
<evidence type="ECO:0000255" key="1">
    <source>
        <dbReference type="HAMAP-Rule" id="MF_00086"/>
    </source>
</evidence>
<comment type="function">
    <text evidence="1">Catalyzes the formation of S-adenosylmethionine (AdoMet) from methionine and ATP. The overall synthetic reaction is composed of two sequential steps, AdoMet formation and the subsequent tripolyphosphate hydrolysis which occurs prior to release of AdoMet from the enzyme.</text>
</comment>
<comment type="catalytic activity">
    <reaction evidence="1">
        <text>L-methionine + ATP + H2O = S-adenosyl-L-methionine + phosphate + diphosphate</text>
        <dbReference type="Rhea" id="RHEA:21080"/>
        <dbReference type="ChEBI" id="CHEBI:15377"/>
        <dbReference type="ChEBI" id="CHEBI:30616"/>
        <dbReference type="ChEBI" id="CHEBI:33019"/>
        <dbReference type="ChEBI" id="CHEBI:43474"/>
        <dbReference type="ChEBI" id="CHEBI:57844"/>
        <dbReference type="ChEBI" id="CHEBI:59789"/>
        <dbReference type="EC" id="2.5.1.6"/>
    </reaction>
</comment>
<comment type="cofactor">
    <cofactor evidence="1">
        <name>Mg(2+)</name>
        <dbReference type="ChEBI" id="CHEBI:18420"/>
    </cofactor>
    <text evidence="1">Binds 2 divalent ions per subunit.</text>
</comment>
<comment type="cofactor">
    <cofactor evidence="1">
        <name>K(+)</name>
        <dbReference type="ChEBI" id="CHEBI:29103"/>
    </cofactor>
    <text evidence="1">Binds 1 potassium ion per subunit.</text>
</comment>
<comment type="pathway">
    <text evidence="1">Amino-acid biosynthesis; S-adenosyl-L-methionine biosynthesis; S-adenosyl-L-methionine from L-methionine: step 1/1.</text>
</comment>
<comment type="subunit">
    <text evidence="1">Homotetramer; dimer of dimers.</text>
</comment>
<comment type="subcellular location">
    <subcellularLocation>
        <location evidence="1">Cytoplasm</location>
    </subcellularLocation>
</comment>
<comment type="similarity">
    <text evidence="1">Belongs to the AdoMet synthase family.</text>
</comment>
<dbReference type="EC" id="2.5.1.6" evidence="1"/>
<dbReference type="EMBL" id="CP000655">
    <property type="protein sequence ID" value="ABP35214.1"/>
    <property type="molecule type" value="Genomic_DNA"/>
</dbReference>
<dbReference type="RefSeq" id="WP_011903837.1">
    <property type="nucleotide sequence ID" value="NC_009379.1"/>
</dbReference>
<dbReference type="SMR" id="A4T0F0"/>
<dbReference type="GeneID" id="31482393"/>
<dbReference type="KEGG" id="pnu:Pnuc_2003"/>
<dbReference type="eggNOG" id="COG0192">
    <property type="taxonomic scope" value="Bacteria"/>
</dbReference>
<dbReference type="HOGENOM" id="CLU_041802_1_1_4"/>
<dbReference type="UniPathway" id="UPA00315">
    <property type="reaction ID" value="UER00080"/>
</dbReference>
<dbReference type="Proteomes" id="UP000000231">
    <property type="component" value="Chromosome"/>
</dbReference>
<dbReference type="GO" id="GO:0005737">
    <property type="term" value="C:cytoplasm"/>
    <property type="evidence" value="ECO:0007669"/>
    <property type="project" value="UniProtKB-SubCell"/>
</dbReference>
<dbReference type="GO" id="GO:0005524">
    <property type="term" value="F:ATP binding"/>
    <property type="evidence" value="ECO:0007669"/>
    <property type="project" value="UniProtKB-UniRule"/>
</dbReference>
<dbReference type="GO" id="GO:0000287">
    <property type="term" value="F:magnesium ion binding"/>
    <property type="evidence" value="ECO:0007669"/>
    <property type="project" value="UniProtKB-UniRule"/>
</dbReference>
<dbReference type="GO" id="GO:0004478">
    <property type="term" value="F:methionine adenosyltransferase activity"/>
    <property type="evidence" value="ECO:0007669"/>
    <property type="project" value="UniProtKB-UniRule"/>
</dbReference>
<dbReference type="GO" id="GO:0006730">
    <property type="term" value="P:one-carbon metabolic process"/>
    <property type="evidence" value="ECO:0007669"/>
    <property type="project" value="UniProtKB-KW"/>
</dbReference>
<dbReference type="GO" id="GO:0006556">
    <property type="term" value="P:S-adenosylmethionine biosynthetic process"/>
    <property type="evidence" value="ECO:0007669"/>
    <property type="project" value="UniProtKB-UniRule"/>
</dbReference>
<dbReference type="CDD" id="cd18079">
    <property type="entry name" value="S-AdoMet_synt"/>
    <property type="match status" value="1"/>
</dbReference>
<dbReference type="FunFam" id="3.30.300.10:FF:000003">
    <property type="entry name" value="S-adenosylmethionine synthase"/>
    <property type="match status" value="1"/>
</dbReference>
<dbReference type="FunFam" id="3.30.300.10:FF:000004">
    <property type="entry name" value="S-adenosylmethionine synthase"/>
    <property type="match status" value="1"/>
</dbReference>
<dbReference type="Gene3D" id="3.30.300.10">
    <property type="match status" value="3"/>
</dbReference>
<dbReference type="HAMAP" id="MF_00086">
    <property type="entry name" value="S_AdoMet_synth1"/>
    <property type="match status" value="1"/>
</dbReference>
<dbReference type="InterPro" id="IPR022631">
    <property type="entry name" value="ADOMET_SYNTHASE_CS"/>
</dbReference>
<dbReference type="InterPro" id="IPR022630">
    <property type="entry name" value="S-AdoMet_synt_C"/>
</dbReference>
<dbReference type="InterPro" id="IPR022629">
    <property type="entry name" value="S-AdoMet_synt_central"/>
</dbReference>
<dbReference type="InterPro" id="IPR022628">
    <property type="entry name" value="S-AdoMet_synt_N"/>
</dbReference>
<dbReference type="InterPro" id="IPR002133">
    <property type="entry name" value="S-AdoMet_synthetase"/>
</dbReference>
<dbReference type="InterPro" id="IPR022636">
    <property type="entry name" value="S-AdoMet_synthetase_sfam"/>
</dbReference>
<dbReference type="NCBIfam" id="TIGR01034">
    <property type="entry name" value="metK"/>
    <property type="match status" value="1"/>
</dbReference>
<dbReference type="PANTHER" id="PTHR11964">
    <property type="entry name" value="S-ADENOSYLMETHIONINE SYNTHETASE"/>
    <property type="match status" value="1"/>
</dbReference>
<dbReference type="Pfam" id="PF02773">
    <property type="entry name" value="S-AdoMet_synt_C"/>
    <property type="match status" value="1"/>
</dbReference>
<dbReference type="Pfam" id="PF02772">
    <property type="entry name" value="S-AdoMet_synt_M"/>
    <property type="match status" value="1"/>
</dbReference>
<dbReference type="Pfam" id="PF00438">
    <property type="entry name" value="S-AdoMet_synt_N"/>
    <property type="match status" value="1"/>
</dbReference>
<dbReference type="PIRSF" id="PIRSF000497">
    <property type="entry name" value="MAT"/>
    <property type="match status" value="1"/>
</dbReference>
<dbReference type="SUPFAM" id="SSF55973">
    <property type="entry name" value="S-adenosylmethionine synthetase"/>
    <property type="match status" value="3"/>
</dbReference>
<dbReference type="PROSITE" id="PS00376">
    <property type="entry name" value="ADOMET_SYNTHASE_1"/>
    <property type="match status" value="1"/>
</dbReference>
<dbReference type="PROSITE" id="PS00377">
    <property type="entry name" value="ADOMET_SYNTHASE_2"/>
    <property type="match status" value="1"/>
</dbReference>
<feature type="chain" id="PRO_1000075385" description="S-adenosylmethionine synthase">
    <location>
        <begin position="1"/>
        <end position="388"/>
    </location>
</feature>
<feature type="region of interest" description="Flexible loop" evidence="1">
    <location>
        <begin position="100"/>
        <end position="110"/>
    </location>
</feature>
<feature type="binding site" description="in other chain" evidence="1">
    <location>
        <position position="16"/>
    </location>
    <ligand>
        <name>ATP</name>
        <dbReference type="ChEBI" id="CHEBI:30616"/>
        <note>ligand shared between two neighboring subunits</note>
    </ligand>
</feature>
<feature type="binding site" evidence="1">
    <location>
        <position position="18"/>
    </location>
    <ligand>
        <name>Mg(2+)</name>
        <dbReference type="ChEBI" id="CHEBI:18420"/>
    </ligand>
</feature>
<feature type="binding site" evidence="1">
    <location>
        <position position="44"/>
    </location>
    <ligand>
        <name>K(+)</name>
        <dbReference type="ChEBI" id="CHEBI:29103"/>
    </ligand>
</feature>
<feature type="binding site" description="in other chain" evidence="1">
    <location>
        <position position="57"/>
    </location>
    <ligand>
        <name>L-methionine</name>
        <dbReference type="ChEBI" id="CHEBI:57844"/>
        <note>ligand shared between two neighboring subunits</note>
    </ligand>
</feature>
<feature type="binding site" description="in other chain" evidence="1">
    <location>
        <position position="100"/>
    </location>
    <ligand>
        <name>L-methionine</name>
        <dbReference type="ChEBI" id="CHEBI:57844"/>
        <note>ligand shared between two neighboring subunits</note>
    </ligand>
</feature>
<feature type="binding site" description="in other chain" evidence="1">
    <location>
        <begin position="167"/>
        <end position="169"/>
    </location>
    <ligand>
        <name>ATP</name>
        <dbReference type="ChEBI" id="CHEBI:30616"/>
        <note>ligand shared between two neighboring subunits</note>
    </ligand>
</feature>
<feature type="binding site" description="in other chain" evidence="1">
    <location>
        <begin position="233"/>
        <end position="234"/>
    </location>
    <ligand>
        <name>ATP</name>
        <dbReference type="ChEBI" id="CHEBI:30616"/>
        <note>ligand shared between two neighboring subunits</note>
    </ligand>
</feature>
<feature type="binding site" evidence="1">
    <location>
        <position position="242"/>
    </location>
    <ligand>
        <name>ATP</name>
        <dbReference type="ChEBI" id="CHEBI:30616"/>
        <note>ligand shared between two neighboring subunits</note>
    </ligand>
</feature>
<feature type="binding site" evidence="1">
    <location>
        <position position="242"/>
    </location>
    <ligand>
        <name>L-methionine</name>
        <dbReference type="ChEBI" id="CHEBI:57844"/>
        <note>ligand shared between two neighboring subunits</note>
    </ligand>
</feature>
<feature type="binding site" description="in other chain" evidence="1">
    <location>
        <begin position="248"/>
        <end position="249"/>
    </location>
    <ligand>
        <name>ATP</name>
        <dbReference type="ChEBI" id="CHEBI:30616"/>
        <note>ligand shared between two neighboring subunits</note>
    </ligand>
</feature>
<feature type="binding site" evidence="1">
    <location>
        <position position="265"/>
    </location>
    <ligand>
        <name>ATP</name>
        <dbReference type="ChEBI" id="CHEBI:30616"/>
        <note>ligand shared between two neighboring subunits</note>
    </ligand>
</feature>
<feature type="binding site" evidence="1">
    <location>
        <position position="269"/>
    </location>
    <ligand>
        <name>ATP</name>
        <dbReference type="ChEBI" id="CHEBI:30616"/>
        <note>ligand shared between two neighboring subunits</note>
    </ligand>
</feature>
<feature type="binding site" description="in other chain" evidence="1">
    <location>
        <position position="273"/>
    </location>
    <ligand>
        <name>L-methionine</name>
        <dbReference type="ChEBI" id="CHEBI:57844"/>
        <note>ligand shared between two neighboring subunits</note>
    </ligand>
</feature>
<proteinExistence type="inferred from homology"/>
<protein>
    <recommendedName>
        <fullName evidence="1">S-adenosylmethionine synthase</fullName>
        <shortName evidence="1">AdoMet synthase</shortName>
        <ecNumber evidence="1">2.5.1.6</ecNumber>
    </recommendedName>
    <alternativeName>
        <fullName evidence="1">MAT</fullName>
    </alternativeName>
    <alternativeName>
        <fullName evidence="1">Methionine adenosyltransferase</fullName>
    </alternativeName>
</protein>